<name>RS4_HALOH</name>
<proteinExistence type="inferred from homology"/>
<organism>
    <name type="scientific">Halothermothrix orenii (strain H 168 / OCM 544 / DSM 9562)</name>
    <dbReference type="NCBI Taxonomy" id="373903"/>
    <lineage>
        <taxon>Bacteria</taxon>
        <taxon>Bacillati</taxon>
        <taxon>Bacillota</taxon>
        <taxon>Clostridia</taxon>
        <taxon>Halanaerobiales</taxon>
        <taxon>Halothermotrichaceae</taxon>
        <taxon>Halothermothrix</taxon>
    </lineage>
</organism>
<protein>
    <recommendedName>
        <fullName evidence="1">Small ribosomal subunit protein uS4</fullName>
    </recommendedName>
    <alternativeName>
        <fullName evidence="2">30S ribosomal protein S4</fullName>
    </alternativeName>
</protein>
<feature type="chain" id="PRO_1000165406" description="Small ribosomal subunit protein uS4">
    <location>
        <begin position="1"/>
        <end position="208"/>
    </location>
</feature>
<feature type="domain" description="S4 RNA-binding" evidence="1">
    <location>
        <begin position="98"/>
        <end position="161"/>
    </location>
</feature>
<dbReference type="EMBL" id="CP001098">
    <property type="protein sequence ID" value="ACL68905.1"/>
    <property type="molecule type" value="Genomic_DNA"/>
</dbReference>
<dbReference type="RefSeq" id="WP_012635103.1">
    <property type="nucleotide sequence ID" value="NC_011899.1"/>
</dbReference>
<dbReference type="SMR" id="B8D0T6"/>
<dbReference type="STRING" id="373903.Hore_01440"/>
<dbReference type="KEGG" id="hor:Hore_01440"/>
<dbReference type="eggNOG" id="COG0522">
    <property type="taxonomic scope" value="Bacteria"/>
</dbReference>
<dbReference type="HOGENOM" id="CLU_092403_0_2_9"/>
<dbReference type="OrthoDB" id="9803672at2"/>
<dbReference type="Proteomes" id="UP000000719">
    <property type="component" value="Chromosome"/>
</dbReference>
<dbReference type="GO" id="GO:0015935">
    <property type="term" value="C:small ribosomal subunit"/>
    <property type="evidence" value="ECO:0007669"/>
    <property type="project" value="InterPro"/>
</dbReference>
<dbReference type="GO" id="GO:0019843">
    <property type="term" value="F:rRNA binding"/>
    <property type="evidence" value="ECO:0007669"/>
    <property type="project" value="UniProtKB-UniRule"/>
</dbReference>
<dbReference type="GO" id="GO:0003735">
    <property type="term" value="F:structural constituent of ribosome"/>
    <property type="evidence" value="ECO:0007669"/>
    <property type="project" value="InterPro"/>
</dbReference>
<dbReference type="GO" id="GO:0042274">
    <property type="term" value="P:ribosomal small subunit biogenesis"/>
    <property type="evidence" value="ECO:0007669"/>
    <property type="project" value="TreeGrafter"/>
</dbReference>
<dbReference type="GO" id="GO:0006412">
    <property type="term" value="P:translation"/>
    <property type="evidence" value="ECO:0007669"/>
    <property type="project" value="UniProtKB-UniRule"/>
</dbReference>
<dbReference type="CDD" id="cd00165">
    <property type="entry name" value="S4"/>
    <property type="match status" value="1"/>
</dbReference>
<dbReference type="FunFam" id="1.10.1050.10:FF:000001">
    <property type="entry name" value="30S ribosomal protein S4"/>
    <property type="match status" value="1"/>
</dbReference>
<dbReference type="FunFam" id="3.10.290.10:FF:000001">
    <property type="entry name" value="30S ribosomal protein S4"/>
    <property type="match status" value="1"/>
</dbReference>
<dbReference type="Gene3D" id="1.10.1050.10">
    <property type="entry name" value="Ribosomal Protein S4 Delta 41, Chain A, domain 1"/>
    <property type="match status" value="1"/>
</dbReference>
<dbReference type="Gene3D" id="3.10.290.10">
    <property type="entry name" value="RNA-binding S4 domain"/>
    <property type="match status" value="1"/>
</dbReference>
<dbReference type="HAMAP" id="MF_01306_B">
    <property type="entry name" value="Ribosomal_uS4_B"/>
    <property type="match status" value="1"/>
</dbReference>
<dbReference type="InterPro" id="IPR022801">
    <property type="entry name" value="Ribosomal_uS4"/>
</dbReference>
<dbReference type="InterPro" id="IPR005709">
    <property type="entry name" value="Ribosomal_uS4_bac-type"/>
</dbReference>
<dbReference type="InterPro" id="IPR018079">
    <property type="entry name" value="Ribosomal_uS4_CS"/>
</dbReference>
<dbReference type="InterPro" id="IPR001912">
    <property type="entry name" value="Ribosomal_uS4_N"/>
</dbReference>
<dbReference type="InterPro" id="IPR002942">
    <property type="entry name" value="S4_RNA-bd"/>
</dbReference>
<dbReference type="InterPro" id="IPR036986">
    <property type="entry name" value="S4_RNA-bd_sf"/>
</dbReference>
<dbReference type="NCBIfam" id="NF003717">
    <property type="entry name" value="PRK05327.1"/>
    <property type="match status" value="1"/>
</dbReference>
<dbReference type="NCBIfam" id="TIGR01017">
    <property type="entry name" value="rpsD_bact"/>
    <property type="match status" value="1"/>
</dbReference>
<dbReference type="PANTHER" id="PTHR11831">
    <property type="entry name" value="30S 40S RIBOSOMAL PROTEIN"/>
    <property type="match status" value="1"/>
</dbReference>
<dbReference type="PANTHER" id="PTHR11831:SF4">
    <property type="entry name" value="SMALL RIBOSOMAL SUBUNIT PROTEIN US4M"/>
    <property type="match status" value="1"/>
</dbReference>
<dbReference type="Pfam" id="PF00163">
    <property type="entry name" value="Ribosomal_S4"/>
    <property type="match status" value="1"/>
</dbReference>
<dbReference type="Pfam" id="PF01479">
    <property type="entry name" value="S4"/>
    <property type="match status" value="1"/>
</dbReference>
<dbReference type="SMART" id="SM01390">
    <property type="entry name" value="Ribosomal_S4"/>
    <property type="match status" value="1"/>
</dbReference>
<dbReference type="SMART" id="SM00363">
    <property type="entry name" value="S4"/>
    <property type="match status" value="1"/>
</dbReference>
<dbReference type="SUPFAM" id="SSF55174">
    <property type="entry name" value="Alpha-L RNA-binding motif"/>
    <property type="match status" value="1"/>
</dbReference>
<dbReference type="PROSITE" id="PS00632">
    <property type="entry name" value="RIBOSOMAL_S4"/>
    <property type="match status" value="1"/>
</dbReference>
<dbReference type="PROSITE" id="PS50889">
    <property type="entry name" value="S4"/>
    <property type="match status" value="1"/>
</dbReference>
<reference key="1">
    <citation type="journal article" date="2009" name="PLoS ONE">
        <title>Genome analysis of the anaerobic thermohalophilic bacterium Halothermothrix orenii.</title>
        <authorList>
            <person name="Mavromatis K."/>
            <person name="Ivanova N."/>
            <person name="Anderson I."/>
            <person name="Lykidis A."/>
            <person name="Hooper S.D."/>
            <person name="Sun H."/>
            <person name="Kunin V."/>
            <person name="Lapidus A."/>
            <person name="Hugenholtz P."/>
            <person name="Patel B."/>
            <person name="Kyrpides N.C."/>
        </authorList>
    </citation>
    <scope>NUCLEOTIDE SEQUENCE [LARGE SCALE GENOMIC DNA]</scope>
    <source>
        <strain>H 168 / OCM 544 / DSM 9562</strain>
    </source>
</reference>
<accession>B8D0T6</accession>
<sequence length="208" mass="24480">MARYKGPVCRLCRREGEKLYLKGQRCYTDKCAIDRRSYPPGEHGRRRNKPTEYGMQLREKQKVKRIYGILEKQFKRYFDMAEKMPGVTGENFLSILERRLDNVVYRLGLATSRNEARQFVLHGHILVNGRKVNIPSYLVDEGDVISVKDSSRKSKRFKEVFEFNEDLTPPKWLSVNLEKAEGKVVAMPTREDIDYPVEEHLIVEFYSR</sequence>
<evidence type="ECO:0000255" key="1">
    <source>
        <dbReference type="HAMAP-Rule" id="MF_01306"/>
    </source>
</evidence>
<evidence type="ECO:0000305" key="2"/>
<keyword id="KW-1185">Reference proteome</keyword>
<keyword id="KW-0687">Ribonucleoprotein</keyword>
<keyword id="KW-0689">Ribosomal protein</keyword>
<keyword id="KW-0694">RNA-binding</keyword>
<keyword id="KW-0699">rRNA-binding</keyword>
<comment type="function">
    <text evidence="1">One of the primary rRNA binding proteins, it binds directly to 16S rRNA where it nucleates assembly of the body of the 30S subunit.</text>
</comment>
<comment type="function">
    <text evidence="1">With S5 and S12 plays an important role in translational accuracy.</text>
</comment>
<comment type="subunit">
    <text evidence="1">Part of the 30S ribosomal subunit. Contacts protein S5. The interaction surface between S4 and S5 is involved in control of translational fidelity.</text>
</comment>
<comment type="similarity">
    <text evidence="1">Belongs to the universal ribosomal protein uS4 family.</text>
</comment>
<gene>
    <name evidence="1" type="primary">rpsD</name>
    <name type="ordered locus">Hore_01440</name>
</gene>